<sequence length="742" mass="83525">MTRRSRRVAYVAKACVSCARSKQRCDGHSPCGRCSLKNLDCVYRHLLQKGQNSTRGASPQSPSASRESYSQNTLPVVQSQTRPLALDSAPSVYSPASEAIGEPPSLSTDVGNNFVEMSMDSGQETFPDGVSVNNLTFKIGESDLQGWASLGVDIPWNSSMHSMLDNPLFELPDPMAFFFQSPSELLGQSDVQAIPCPMDSEPMVHQLECETPTPNFTHSLDISSYQGQSNQTSPETTSHSSVRDDAELESWRAEDYGHVPDINDEAYQVMVFTFEQLNSDNVYCIPFTDKHLPSLQHMQIYMQVYFEEYHPIFPLLHKATFSPNKDDWLLSLAVSSIGCLFSKTLRSKEVFPIMQEFLRRAIRIQTSTPSISVAQASVLNQIGMMYGGDLRFAECAHETMAQLTTQCRKIASSSHNLANSSIAENTVSQGWQAWVRAQLEIRLFYCAWLVDSQQVGFFAFSSTIPIDFLQFPMPINEYVWGMSTAETWQNSLAEDSSSQQLTSLRQVLMGLYRYREVPGQLDAFNSLLLVMGILNDLSGLRHAHLYLEILQRRVETLPPTALTRAVMTNIHMVSLLIYFPTREVIAFGRWRVTEAQHSIVTEKLKRWMSDTRSARAALVHACSIWSQVRLSRTNSHHEPPALLYSAISIWALVEHSEEVVENADELPILRLDSLNQDVKLWAAGNEKKRLYLSGVGLLAHRGALARLISETARLLEQRIAWPQAWRTGPHLKQSYAESRRVQ</sequence>
<protein>
    <recommendedName>
        <fullName evidence="4">Transcription factor FFUJ_09177</fullName>
    </recommendedName>
    <alternativeName>
        <fullName evidence="4">DMATS1 biosynthesis cluster protein FFUJ_09177</fullName>
    </alternativeName>
</protein>
<proteinExistence type="evidence at transcript level"/>
<accession>S0EJF2</accession>
<feature type="chain" id="PRO_0000452657" description="Transcription factor FFUJ_09177">
    <location>
        <begin position="1"/>
        <end position="742"/>
    </location>
</feature>
<feature type="DNA-binding region" description="Zn(2)-C6 fungal-type" evidence="1">
    <location>
        <begin position="15"/>
        <end position="41"/>
    </location>
</feature>
<feature type="region of interest" description="Disordered" evidence="2">
    <location>
        <begin position="50"/>
        <end position="80"/>
    </location>
</feature>
<feature type="region of interest" description="Disordered" evidence="2">
    <location>
        <begin position="218"/>
        <end position="244"/>
    </location>
</feature>
<feature type="compositionally biased region" description="Polar residues" evidence="2">
    <location>
        <begin position="218"/>
        <end position="240"/>
    </location>
</feature>
<gene>
    <name type="ORF">FFUJ_09177</name>
</gene>
<organism>
    <name type="scientific">Gibberella fujikuroi (strain CBS 195.34 / IMI 58289 / NRRL A-6831)</name>
    <name type="common">Bakanae and foot rot disease fungus</name>
    <name type="synonym">Fusarium fujikuroi</name>
    <dbReference type="NCBI Taxonomy" id="1279085"/>
    <lineage>
        <taxon>Eukaryota</taxon>
        <taxon>Fungi</taxon>
        <taxon>Dikarya</taxon>
        <taxon>Ascomycota</taxon>
        <taxon>Pezizomycotina</taxon>
        <taxon>Sordariomycetes</taxon>
        <taxon>Hypocreomycetidae</taxon>
        <taxon>Hypocreales</taxon>
        <taxon>Nectriaceae</taxon>
        <taxon>Fusarium</taxon>
        <taxon>Fusarium fujikuroi species complex</taxon>
    </lineage>
</organism>
<dbReference type="EMBL" id="HF679031">
    <property type="protein sequence ID" value="CCT73987.1"/>
    <property type="molecule type" value="Genomic_DNA"/>
</dbReference>
<dbReference type="RefSeq" id="XP_023436065.1">
    <property type="nucleotide sequence ID" value="XM_023568950.1"/>
</dbReference>
<dbReference type="SMR" id="S0EJF2"/>
<dbReference type="STRING" id="1279085.S0EJF2"/>
<dbReference type="EnsemblFungi" id="CCT73987">
    <property type="protein sequence ID" value="CCT73987"/>
    <property type="gene ID" value="FFUJ_09177"/>
</dbReference>
<dbReference type="GeneID" id="35402646"/>
<dbReference type="VEuPathDB" id="FungiDB:FFUJ_09177"/>
<dbReference type="HOGENOM" id="CLU_003864_3_0_1"/>
<dbReference type="Proteomes" id="UP000016800">
    <property type="component" value="Chromosome 9"/>
</dbReference>
<dbReference type="GO" id="GO:0005634">
    <property type="term" value="C:nucleus"/>
    <property type="evidence" value="ECO:0007669"/>
    <property type="project" value="UniProtKB-SubCell"/>
</dbReference>
<dbReference type="GO" id="GO:0003677">
    <property type="term" value="F:DNA binding"/>
    <property type="evidence" value="ECO:0007669"/>
    <property type="project" value="UniProtKB-KW"/>
</dbReference>
<dbReference type="GO" id="GO:0000981">
    <property type="term" value="F:DNA-binding transcription factor activity, RNA polymerase II-specific"/>
    <property type="evidence" value="ECO:0007669"/>
    <property type="project" value="InterPro"/>
</dbReference>
<dbReference type="GO" id="GO:0008270">
    <property type="term" value="F:zinc ion binding"/>
    <property type="evidence" value="ECO:0007669"/>
    <property type="project" value="InterPro"/>
</dbReference>
<dbReference type="GO" id="GO:0006351">
    <property type="term" value="P:DNA-templated transcription"/>
    <property type="evidence" value="ECO:0007669"/>
    <property type="project" value="InterPro"/>
</dbReference>
<dbReference type="CDD" id="cd12148">
    <property type="entry name" value="fungal_TF_MHR"/>
    <property type="match status" value="1"/>
</dbReference>
<dbReference type="CDD" id="cd00067">
    <property type="entry name" value="GAL4"/>
    <property type="match status" value="1"/>
</dbReference>
<dbReference type="Gene3D" id="4.10.240.10">
    <property type="entry name" value="Zn(2)-C6 fungal-type DNA-binding domain"/>
    <property type="match status" value="1"/>
</dbReference>
<dbReference type="InterPro" id="IPR007219">
    <property type="entry name" value="Transcription_factor_dom_fun"/>
</dbReference>
<dbReference type="InterPro" id="IPR036864">
    <property type="entry name" value="Zn2-C6_fun-type_DNA-bd_sf"/>
</dbReference>
<dbReference type="InterPro" id="IPR001138">
    <property type="entry name" value="Zn2Cys6_DnaBD"/>
</dbReference>
<dbReference type="PANTHER" id="PTHR47660">
    <property type="entry name" value="TRANSCRIPTION FACTOR WITH C2H2 AND ZN(2)-CYS(6) DNA BINDING DOMAIN (EUROFUNG)-RELATED-RELATED"/>
    <property type="match status" value="1"/>
</dbReference>
<dbReference type="Pfam" id="PF04082">
    <property type="entry name" value="Fungal_trans"/>
    <property type="match status" value="1"/>
</dbReference>
<dbReference type="Pfam" id="PF00172">
    <property type="entry name" value="Zn_clus"/>
    <property type="match status" value="1"/>
</dbReference>
<dbReference type="SMART" id="SM00066">
    <property type="entry name" value="GAL4"/>
    <property type="match status" value="1"/>
</dbReference>
<dbReference type="SUPFAM" id="SSF57701">
    <property type="entry name" value="Zn2/Cys6 DNA-binding domain"/>
    <property type="match status" value="1"/>
</dbReference>
<dbReference type="PROSITE" id="PS00463">
    <property type="entry name" value="ZN2_CY6_FUNGAL_1"/>
    <property type="match status" value="1"/>
</dbReference>
<dbReference type="PROSITE" id="PS50048">
    <property type="entry name" value="ZN2_CY6_FUNGAL_2"/>
    <property type="match status" value="1"/>
</dbReference>
<evidence type="ECO:0000255" key="1">
    <source>
        <dbReference type="PROSITE-ProRule" id="PRU00227"/>
    </source>
</evidence>
<evidence type="ECO:0000256" key="2">
    <source>
        <dbReference type="SAM" id="MobiDB-lite"/>
    </source>
</evidence>
<evidence type="ECO:0000269" key="3">
    <source>
    </source>
</evidence>
<evidence type="ECO:0000303" key="4">
    <source>
    </source>
</evidence>
<reference key="1">
    <citation type="journal article" date="2013" name="PLoS Pathog.">
        <title>Deciphering the cryptic genome: genome-wide analyses of the rice pathogen Fusarium fujikuroi reveal complex regulation of secondary metabolism and novel metabolites.</title>
        <authorList>
            <person name="Wiemann P."/>
            <person name="Sieber C.M.K."/>
            <person name="von Bargen K.W."/>
            <person name="Studt L."/>
            <person name="Niehaus E.-M."/>
            <person name="Espino J.J."/>
            <person name="Huss K."/>
            <person name="Michielse C.B."/>
            <person name="Albermann S."/>
            <person name="Wagner D."/>
            <person name="Bergner S.V."/>
            <person name="Connolly L.R."/>
            <person name="Fischer A."/>
            <person name="Reuter G."/>
            <person name="Kleigrewe K."/>
            <person name="Bald T."/>
            <person name="Wingfield B.D."/>
            <person name="Ophir R."/>
            <person name="Freeman S."/>
            <person name="Hippler M."/>
            <person name="Smith K.M."/>
            <person name="Brown D.W."/>
            <person name="Proctor R.H."/>
            <person name="Muensterkoetter M."/>
            <person name="Freitag M."/>
            <person name="Humpf H.-U."/>
            <person name="Gueldener U."/>
            <person name="Tudzynski B."/>
        </authorList>
    </citation>
    <scope>NUCLEOTIDE SEQUENCE [LARGE SCALE GENOMIC DNA]</scope>
    <source>
        <strain>CBS 195.34 / IMI 58289 / NRRL A-6831</strain>
    </source>
</reference>
<reference key="2">
    <citation type="journal article" date="2017" name="ChemBioChem">
        <title>A Fungal N-Dimethylallyltryptophan Metabolite from Fusarium fujikuroi.</title>
        <authorList>
            <person name="Arndt B."/>
            <person name="Janevska S."/>
            <person name="Schmid R."/>
            <person name="Huebner F."/>
            <person name="Tudzynski B."/>
            <person name="Humpf H.U."/>
        </authorList>
    </citation>
    <scope>FUNCTION</scope>
    <scope>INDUCTION</scope>
    <scope>DISRUPTION PHENOTYPE</scope>
</reference>
<comment type="function">
    <text evidence="3">Transcription factor; part of the DMATS1 gene cluster that mediates the biosynthesis of a reversely N-prenylated monomeric L-tryptophan (r-N-DMAT) (PubMed:28295904). Seems not to regulate the expression of the DMATS1 cluster (PubMed:28295904).</text>
</comment>
<comment type="subcellular location">
    <subcellularLocation>
        <location evidence="1">Nucleus</location>
    </subcellularLocation>
</comment>
<comment type="induction">
    <text evidence="3">Expression is negaticely regulated by the global nitrogen regulator areA.</text>
</comment>
<comment type="disruption phenotype">
    <text evidence="3">Does not affect the expression of expression of DMATS1, FFUJ_09176,and FFUJ_09178; nor the metabolite production.</text>
</comment>
<keyword id="KW-0238">DNA-binding</keyword>
<keyword id="KW-0479">Metal-binding</keyword>
<keyword id="KW-0539">Nucleus</keyword>
<keyword id="KW-1185">Reference proteome</keyword>
<keyword id="KW-0804">Transcription</keyword>
<keyword id="KW-0805">Transcription regulation</keyword>
<keyword id="KW-0862">Zinc</keyword>
<name>TF177_GIBF5</name>